<dbReference type="EC" id="2.1.1.-" evidence="1"/>
<dbReference type="EC" id="2.1.1.35" evidence="1"/>
<dbReference type="EMBL" id="AE017340">
    <property type="protein sequence ID" value="AAV83105.1"/>
    <property type="status" value="ALT_INIT"/>
    <property type="molecule type" value="Genomic_DNA"/>
</dbReference>
<dbReference type="RefSeq" id="WP_016341401.1">
    <property type="nucleotide sequence ID" value="NC_006512.1"/>
</dbReference>
<dbReference type="SMR" id="Q5QVT1"/>
<dbReference type="STRING" id="283942.IL2273"/>
<dbReference type="GeneID" id="41337467"/>
<dbReference type="KEGG" id="ilo:IL2273"/>
<dbReference type="eggNOG" id="COG2265">
    <property type="taxonomic scope" value="Bacteria"/>
</dbReference>
<dbReference type="HOGENOM" id="CLU_043022_0_0_6"/>
<dbReference type="OrthoDB" id="9804590at2"/>
<dbReference type="Proteomes" id="UP000001171">
    <property type="component" value="Chromosome"/>
</dbReference>
<dbReference type="GO" id="GO:0005829">
    <property type="term" value="C:cytosol"/>
    <property type="evidence" value="ECO:0007669"/>
    <property type="project" value="TreeGrafter"/>
</dbReference>
<dbReference type="GO" id="GO:0019843">
    <property type="term" value="F:rRNA binding"/>
    <property type="evidence" value="ECO:0007669"/>
    <property type="project" value="TreeGrafter"/>
</dbReference>
<dbReference type="GO" id="GO:0030697">
    <property type="term" value="F:tRNA (uracil(54)-C5)-methyltransferase activity, S-adenosyl methionine-dependent"/>
    <property type="evidence" value="ECO:0007669"/>
    <property type="project" value="UniProtKB-UniRule"/>
</dbReference>
<dbReference type="GO" id="GO:0000049">
    <property type="term" value="F:tRNA binding"/>
    <property type="evidence" value="ECO:0007669"/>
    <property type="project" value="TreeGrafter"/>
</dbReference>
<dbReference type="GO" id="GO:0030488">
    <property type="term" value="P:tRNA methylation"/>
    <property type="evidence" value="ECO:0007669"/>
    <property type="project" value="UniProtKB-UniRule"/>
</dbReference>
<dbReference type="CDD" id="cd02440">
    <property type="entry name" value="AdoMet_MTases"/>
    <property type="match status" value="1"/>
</dbReference>
<dbReference type="FunFam" id="2.40.50.1070:FF:000001">
    <property type="entry name" value="tRNA/tmRNA (uracil-C(5))-methyltransferase"/>
    <property type="match status" value="1"/>
</dbReference>
<dbReference type="FunFam" id="3.40.50.150:FF:000012">
    <property type="entry name" value="tRNA/tmRNA (uracil-C(5))-methyltransferase"/>
    <property type="match status" value="1"/>
</dbReference>
<dbReference type="Gene3D" id="2.40.50.1070">
    <property type="match status" value="1"/>
</dbReference>
<dbReference type="Gene3D" id="3.40.50.150">
    <property type="entry name" value="Vaccinia Virus protein VP39"/>
    <property type="match status" value="1"/>
</dbReference>
<dbReference type="HAMAP" id="MF_01011">
    <property type="entry name" value="RNA_methyltr_TrmA"/>
    <property type="match status" value="1"/>
</dbReference>
<dbReference type="InterPro" id="IPR030390">
    <property type="entry name" value="MeTrfase_TrmA_AS"/>
</dbReference>
<dbReference type="InterPro" id="IPR030391">
    <property type="entry name" value="MeTrfase_TrmA_CS"/>
</dbReference>
<dbReference type="InterPro" id="IPR029063">
    <property type="entry name" value="SAM-dependent_MTases_sf"/>
</dbReference>
<dbReference type="InterPro" id="IPR011869">
    <property type="entry name" value="TrmA_MeTrfase"/>
</dbReference>
<dbReference type="InterPro" id="IPR010280">
    <property type="entry name" value="U5_MeTrfase_fam"/>
</dbReference>
<dbReference type="NCBIfam" id="TIGR02143">
    <property type="entry name" value="trmA_only"/>
    <property type="match status" value="1"/>
</dbReference>
<dbReference type="PANTHER" id="PTHR47790">
    <property type="entry name" value="TRNA/TMRNA (URACIL-C(5))-METHYLTRANSFERASE"/>
    <property type="match status" value="1"/>
</dbReference>
<dbReference type="PANTHER" id="PTHR47790:SF2">
    <property type="entry name" value="TRNA_TMRNA (URACIL-C(5))-METHYLTRANSFERASE"/>
    <property type="match status" value="1"/>
</dbReference>
<dbReference type="Pfam" id="PF05958">
    <property type="entry name" value="tRNA_U5-meth_tr"/>
    <property type="match status" value="1"/>
</dbReference>
<dbReference type="SUPFAM" id="SSF53335">
    <property type="entry name" value="S-adenosyl-L-methionine-dependent methyltransferases"/>
    <property type="match status" value="1"/>
</dbReference>
<dbReference type="PROSITE" id="PS51687">
    <property type="entry name" value="SAM_MT_RNA_M5U"/>
    <property type="match status" value="1"/>
</dbReference>
<dbReference type="PROSITE" id="PS01230">
    <property type="entry name" value="TRMA_1"/>
    <property type="match status" value="1"/>
</dbReference>
<dbReference type="PROSITE" id="PS01231">
    <property type="entry name" value="TRMA_2"/>
    <property type="match status" value="1"/>
</dbReference>
<organism>
    <name type="scientific">Idiomarina loihiensis (strain ATCC BAA-735 / DSM 15497 / L2-TR)</name>
    <dbReference type="NCBI Taxonomy" id="283942"/>
    <lineage>
        <taxon>Bacteria</taxon>
        <taxon>Pseudomonadati</taxon>
        <taxon>Pseudomonadota</taxon>
        <taxon>Gammaproteobacteria</taxon>
        <taxon>Alteromonadales</taxon>
        <taxon>Idiomarinaceae</taxon>
        <taxon>Idiomarina</taxon>
    </lineage>
</organism>
<accession>Q5QVT1</accession>
<reference key="1">
    <citation type="journal article" date="2004" name="Proc. Natl. Acad. Sci. U.S.A.">
        <title>Genome sequence of the deep-sea gamma-proteobacterium Idiomarina loihiensis reveals amino acid fermentation as a source of carbon and energy.</title>
        <authorList>
            <person name="Hou S."/>
            <person name="Saw J.H."/>
            <person name="Lee K.S."/>
            <person name="Freitas T.A."/>
            <person name="Belisle C."/>
            <person name="Kawarabayasi Y."/>
            <person name="Donachie S.P."/>
            <person name="Pikina A."/>
            <person name="Galperin M.Y."/>
            <person name="Koonin E.V."/>
            <person name="Makarova K.S."/>
            <person name="Omelchenko M.V."/>
            <person name="Sorokin A."/>
            <person name="Wolf Y.I."/>
            <person name="Li Q.X."/>
            <person name="Keum Y.S."/>
            <person name="Campbell S."/>
            <person name="Denery J."/>
            <person name="Aizawa S."/>
            <person name="Shibata S."/>
            <person name="Malahoff A."/>
            <person name="Alam M."/>
        </authorList>
    </citation>
    <scope>NUCLEOTIDE SEQUENCE [LARGE SCALE GENOMIC DNA]</scope>
    <source>
        <strain>ATCC BAA-735 / DSM 15497 / L2-TR</strain>
    </source>
</reference>
<protein>
    <recommendedName>
        <fullName evidence="1">tRNA/tmRNA (uracil-C(5))-methyltransferase</fullName>
        <ecNumber evidence="1">2.1.1.-</ecNumber>
        <ecNumber evidence="1">2.1.1.35</ecNumber>
    </recommendedName>
    <alternativeName>
        <fullName evidence="1">tRNA (uracil(54)-C(5))-methyltransferase</fullName>
    </alternativeName>
    <alternativeName>
        <fullName evidence="1">tRNA(m5U54)-methyltransferase</fullName>
        <shortName evidence="1">RUMT</shortName>
    </alternativeName>
    <alternativeName>
        <fullName evidence="1">tmRNA (uracil(341)-C(5))-methyltransferase</fullName>
    </alternativeName>
</protein>
<name>TRMA_IDILO</name>
<comment type="function">
    <text evidence="1">Dual-specificity methyltransferase that catalyzes the formation of 5-methyluridine at position 54 (m5U54) in all tRNAs, and that of position 341 (m5U341) in tmRNA (transfer-mRNA).</text>
</comment>
<comment type="catalytic activity">
    <reaction evidence="1">
        <text>uridine(54) in tRNA + S-adenosyl-L-methionine = 5-methyluridine(54) in tRNA + S-adenosyl-L-homocysteine + H(+)</text>
        <dbReference type="Rhea" id="RHEA:42712"/>
        <dbReference type="Rhea" id="RHEA-COMP:10167"/>
        <dbReference type="Rhea" id="RHEA-COMP:10193"/>
        <dbReference type="ChEBI" id="CHEBI:15378"/>
        <dbReference type="ChEBI" id="CHEBI:57856"/>
        <dbReference type="ChEBI" id="CHEBI:59789"/>
        <dbReference type="ChEBI" id="CHEBI:65315"/>
        <dbReference type="ChEBI" id="CHEBI:74447"/>
        <dbReference type="EC" id="2.1.1.35"/>
    </reaction>
</comment>
<comment type="catalytic activity">
    <reaction evidence="1">
        <text>uridine(341) in tmRNA + S-adenosyl-L-methionine = 5-methyluridine(341) in tmRNA + S-adenosyl-L-homocysteine + H(+)</text>
        <dbReference type="Rhea" id="RHEA:43612"/>
        <dbReference type="Rhea" id="RHEA-COMP:10630"/>
        <dbReference type="Rhea" id="RHEA-COMP:10631"/>
        <dbReference type="ChEBI" id="CHEBI:15378"/>
        <dbReference type="ChEBI" id="CHEBI:57856"/>
        <dbReference type="ChEBI" id="CHEBI:59789"/>
        <dbReference type="ChEBI" id="CHEBI:65315"/>
        <dbReference type="ChEBI" id="CHEBI:74447"/>
    </reaction>
</comment>
<comment type="similarity">
    <text evidence="1">Belongs to the class I-like SAM-binding methyltransferase superfamily. RNA M5U methyltransferase family. TrmA subfamily.</text>
</comment>
<comment type="sequence caution" evidence="2">
    <conflict type="erroneous initiation">
        <sequence resource="EMBL-CDS" id="AAV83105"/>
    </conflict>
    <text>Truncated N-terminus.</text>
</comment>
<sequence>MTYKRIDTSEYPQQLAQKADRVREMFRPFHLNEVEVFESPASHYRMRAEFRVWHEGDDLYYIMFNPETREKIRMNEFIPGSLLINELMKELISLLKPNDVLRRKLFQVDFLTTTTGEAIISLLYHRPLDDQWEQEAIQLREALTSIAKVEVIGRARKQKRVLYKESVTEEVKVDGKSYLSLQTENSFTQPNAIINQQMISWAKRHAGNNSHDLLELYCGNGNFTLPLAENFNRVLATEISKSSVAAARENAELNNIKNVTVVRMSAEEFSAALSGELESKRAADAEIHSFDCQTVLVDPPRAGLDKDTLKLVSQYQRIIYISCNPETLTENIHDLSSSHKVTAAAMFDQFPYTDHIETGVVLERKS</sequence>
<proteinExistence type="inferred from homology"/>
<keyword id="KW-0489">Methyltransferase</keyword>
<keyword id="KW-1185">Reference proteome</keyword>
<keyword id="KW-0949">S-adenosyl-L-methionine</keyword>
<keyword id="KW-0808">Transferase</keyword>
<keyword id="KW-0819">tRNA processing</keyword>
<feature type="chain" id="PRO_0000281446" description="tRNA/tmRNA (uracil-C(5))-methyltransferase">
    <location>
        <begin position="1"/>
        <end position="366"/>
    </location>
</feature>
<feature type="active site" description="Nucleophile" evidence="1">
    <location>
        <position position="323"/>
    </location>
</feature>
<feature type="active site" description="Proton acceptor" evidence="1">
    <location>
        <position position="357"/>
    </location>
</feature>
<feature type="binding site" evidence="1">
    <location>
        <position position="189"/>
    </location>
    <ligand>
        <name>S-adenosyl-L-methionine</name>
        <dbReference type="ChEBI" id="CHEBI:59789"/>
    </ligand>
</feature>
<feature type="binding site" evidence="1">
    <location>
        <position position="217"/>
    </location>
    <ligand>
        <name>S-adenosyl-L-methionine</name>
        <dbReference type="ChEBI" id="CHEBI:59789"/>
    </ligand>
</feature>
<feature type="binding site" evidence="1">
    <location>
        <position position="222"/>
    </location>
    <ligand>
        <name>S-adenosyl-L-methionine</name>
        <dbReference type="ChEBI" id="CHEBI:59789"/>
    </ligand>
</feature>
<feature type="binding site" evidence="1">
    <location>
        <position position="238"/>
    </location>
    <ligand>
        <name>S-adenosyl-L-methionine</name>
        <dbReference type="ChEBI" id="CHEBI:59789"/>
    </ligand>
</feature>
<feature type="binding site" evidence="1">
    <location>
        <position position="298"/>
    </location>
    <ligand>
        <name>S-adenosyl-L-methionine</name>
        <dbReference type="ChEBI" id="CHEBI:59789"/>
    </ligand>
</feature>
<evidence type="ECO:0000255" key="1">
    <source>
        <dbReference type="HAMAP-Rule" id="MF_01011"/>
    </source>
</evidence>
<evidence type="ECO:0000305" key="2"/>
<gene>
    <name evidence="1" type="primary">trmA</name>
    <name type="ordered locus">IL2273</name>
</gene>